<reference key="1">
    <citation type="submission" date="2007-11" db="EMBL/GenBank/DDBJ databases">
        <authorList>
            <consortium name="The Salmonella enterica serovar Paratyphi B Genome Sequencing Project"/>
            <person name="McClelland M."/>
            <person name="Sanderson E.K."/>
            <person name="Porwollik S."/>
            <person name="Spieth J."/>
            <person name="Clifton W.S."/>
            <person name="Fulton R."/>
            <person name="Cordes M."/>
            <person name="Wollam A."/>
            <person name="Shah N."/>
            <person name="Pepin K."/>
            <person name="Bhonagiri V."/>
            <person name="Nash W."/>
            <person name="Johnson M."/>
            <person name="Thiruvilangam P."/>
            <person name="Wilson R."/>
        </authorList>
    </citation>
    <scope>NUCLEOTIDE SEQUENCE [LARGE SCALE GENOMIC DNA]</scope>
    <source>
        <strain>ATCC BAA-1250 / SPB7</strain>
    </source>
</reference>
<organism>
    <name type="scientific">Salmonella paratyphi B (strain ATCC BAA-1250 / SPB7)</name>
    <dbReference type="NCBI Taxonomy" id="1016998"/>
    <lineage>
        <taxon>Bacteria</taxon>
        <taxon>Pseudomonadati</taxon>
        <taxon>Pseudomonadota</taxon>
        <taxon>Gammaproteobacteria</taxon>
        <taxon>Enterobacterales</taxon>
        <taxon>Enterobacteriaceae</taxon>
        <taxon>Salmonella</taxon>
    </lineage>
</organism>
<gene>
    <name evidence="1" type="primary">ynfB</name>
    <name type="ordered locus">SPAB_01808</name>
</gene>
<feature type="signal peptide" evidence="1">
    <location>
        <begin position="1"/>
        <end position="28"/>
    </location>
</feature>
<feature type="chain" id="PRO_1000087934" description="UPF0482 protein YnfB">
    <location>
        <begin position="29"/>
        <end position="113"/>
    </location>
</feature>
<sequence length="113" mass="12846">MNNTLSKRLCLTAMLTLAAVVYTTSAFAETSKLVIESGDSAQSRQEAAMEKEQWNDTRSLRQKVNTRAEKEWDKADAAFDNRDKCEQSANINAYWEPNTLRCLDRRTGRVITP</sequence>
<proteinExistence type="inferred from homology"/>
<keyword id="KW-0732">Signal</keyword>
<evidence type="ECO:0000255" key="1">
    <source>
        <dbReference type="HAMAP-Rule" id="MF_01581"/>
    </source>
</evidence>
<comment type="similarity">
    <text evidence="1">Belongs to the UPF0482 family.</text>
</comment>
<name>YNFB_SALPB</name>
<dbReference type="EMBL" id="CP000886">
    <property type="protein sequence ID" value="ABX67201.1"/>
    <property type="molecule type" value="Genomic_DNA"/>
</dbReference>
<dbReference type="RefSeq" id="WP_001066440.1">
    <property type="nucleotide sequence ID" value="NC_010102.1"/>
</dbReference>
<dbReference type="KEGG" id="spq:SPAB_01808"/>
<dbReference type="PATRIC" id="fig|1016998.12.peg.1703"/>
<dbReference type="HOGENOM" id="CLU_167574_0_0_6"/>
<dbReference type="BioCyc" id="SENT1016998:SPAB_RS07325-MONOMER"/>
<dbReference type="Proteomes" id="UP000008556">
    <property type="component" value="Chromosome"/>
</dbReference>
<dbReference type="HAMAP" id="MF_01581">
    <property type="entry name" value="UPF0482"/>
    <property type="match status" value="1"/>
</dbReference>
<dbReference type="InterPro" id="IPR009700">
    <property type="entry name" value="DUF1283"/>
</dbReference>
<dbReference type="NCBIfam" id="NF010180">
    <property type="entry name" value="PRK13659.1"/>
    <property type="match status" value="1"/>
</dbReference>
<dbReference type="Pfam" id="PF06932">
    <property type="entry name" value="DUF1283"/>
    <property type="match status" value="1"/>
</dbReference>
<accession>A9MZX0</accession>
<protein>
    <recommendedName>
        <fullName evidence="1">UPF0482 protein YnfB</fullName>
    </recommendedName>
</protein>